<dbReference type="EC" id="3.6.4.-" evidence="1"/>
<dbReference type="EMBL" id="L04532">
    <property type="protein sequence ID" value="AAA47299.1"/>
    <property type="molecule type" value="Genomic_RNA"/>
</dbReference>
<dbReference type="PDB" id="1L9V">
    <property type="method" value="X-ray"/>
    <property type="resolution" value="2.60 A"/>
    <property type="chains" value="A=1-317"/>
</dbReference>
<dbReference type="PDB" id="2R7C">
    <property type="method" value="X-ray"/>
    <property type="resolution" value="2.70 A"/>
    <property type="chains" value="A=1-317"/>
</dbReference>
<dbReference type="PDB" id="2R7J">
    <property type="method" value="X-ray"/>
    <property type="resolution" value="2.60 A"/>
    <property type="chains" value="A=1-317"/>
</dbReference>
<dbReference type="PDB" id="2R7P">
    <property type="method" value="X-ray"/>
    <property type="resolution" value="2.80 A"/>
    <property type="chains" value="A=1-317"/>
</dbReference>
<dbReference type="PDB" id="2R8F">
    <property type="method" value="X-ray"/>
    <property type="resolution" value="2.80 A"/>
    <property type="chains" value="A=1-317"/>
</dbReference>
<dbReference type="PDB" id="4G0A">
    <property type="method" value="X-ray"/>
    <property type="resolution" value="2.10 A"/>
    <property type="chains" value="A/B/C/D=1-317"/>
</dbReference>
<dbReference type="PDB" id="4G0J">
    <property type="method" value="X-ray"/>
    <property type="resolution" value="3.40 A"/>
    <property type="chains" value="A/B/C/D/E/F/G/H/I/J=1-294"/>
</dbReference>
<dbReference type="PDBsum" id="1L9V"/>
<dbReference type="PDBsum" id="2R7C"/>
<dbReference type="PDBsum" id="2R7J"/>
<dbReference type="PDBsum" id="2R7P"/>
<dbReference type="PDBsum" id="2R8F"/>
<dbReference type="PDBsum" id="4G0A"/>
<dbReference type="PDBsum" id="4G0J"/>
<dbReference type="SMR" id="Q03243"/>
<dbReference type="EvolutionaryTrace" id="Q03243"/>
<dbReference type="GO" id="GO:0030430">
    <property type="term" value="C:host cell cytoplasm"/>
    <property type="evidence" value="ECO:0007669"/>
    <property type="project" value="UniProtKB-SubCell"/>
</dbReference>
<dbReference type="GO" id="GO:0005524">
    <property type="term" value="F:ATP binding"/>
    <property type="evidence" value="ECO:0007669"/>
    <property type="project" value="UniProtKB-KW"/>
</dbReference>
<dbReference type="GO" id="GO:0046872">
    <property type="term" value="F:metal ion binding"/>
    <property type="evidence" value="ECO:0007669"/>
    <property type="project" value="UniProtKB-UniRule"/>
</dbReference>
<dbReference type="GO" id="GO:0004550">
    <property type="term" value="F:nucleoside diphosphate kinase activity"/>
    <property type="evidence" value="ECO:0007669"/>
    <property type="project" value="InterPro"/>
</dbReference>
<dbReference type="GO" id="GO:0017111">
    <property type="term" value="F:ribonucleoside triphosphate phosphatase activity"/>
    <property type="evidence" value="ECO:0007669"/>
    <property type="project" value="InterPro"/>
</dbReference>
<dbReference type="GO" id="GO:0003723">
    <property type="term" value="F:RNA binding"/>
    <property type="evidence" value="ECO:0007669"/>
    <property type="project" value="UniProtKB-UniRule"/>
</dbReference>
<dbReference type="GO" id="GO:0019079">
    <property type="term" value="P:viral genome replication"/>
    <property type="evidence" value="ECO:0007669"/>
    <property type="project" value="UniProtKB-UniRule"/>
</dbReference>
<dbReference type="Gene3D" id="3.30.428.20">
    <property type="entry name" value="Rotavirus NSP2 fragment, C-terminal domain"/>
    <property type="match status" value="1"/>
</dbReference>
<dbReference type="Gene3D" id="3.90.1400.10">
    <property type="entry name" value="Rotavirus NSP2 fragment, N-terminal domain"/>
    <property type="match status" value="1"/>
</dbReference>
<dbReference type="HAMAP" id="MF_04089">
    <property type="entry name" value="ROTA_NSP2"/>
    <property type="match status" value="1"/>
</dbReference>
<dbReference type="InterPro" id="IPR048306">
    <property type="entry name" value="Rota_NS35_C"/>
</dbReference>
<dbReference type="InterPro" id="IPR048573">
    <property type="entry name" value="Rota_NS35_N"/>
</dbReference>
<dbReference type="InterPro" id="IPR003668">
    <property type="entry name" value="Rotavirus_NSP2"/>
</dbReference>
<dbReference type="InterPro" id="IPR024076">
    <property type="entry name" value="Rotavirus_NSP2_C"/>
</dbReference>
<dbReference type="InterPro" id="IPR024068">
    <property type="entry name" value="Rotavirus_NSP2_N"/>
</dbReference>
<dbReference type="Pfam" id="PF02509">
    <property type="entry name" value="Rota_NS35_C"/>
    <property type="match status" value="1"/>
</dbReference>
<dbReference type="Pfam" id="PF21067">
    <property type="entry name" value="Rota_NS35_N"/>
    <property type="match status" value="1"/>
</dbReference>
<dbReference type="SUPFAM" id="SSF75347">
    <property type="entry name" value="Rotavirus NSP2 fragment, C-terminal domain"/>
    <property type="match status" value="1"/>
</dbReference>
<dbReference type="SUPFAM" id="SSF75574">
    <property type="entry name" value="Rotavirus NSP2 fragment, N-terminal domain"/>
    <property type="match status" value="1"/>
</dbReference>
<comment type="function">
    <text evidence="1">Participates in replication and packaging of the viral genome. Plays a crucial role, together with NSP5, in the formation of virus factories (viroplasms), which are large inclusions in the host cytoplasm where replication intermediates are assembled and viral RNA replication takes place. Displays ssRNA binding, NTPase, RNA triphosphatase (RTPase) and ATP-independent helix-unwinding activities. The unwinding activity may prepare and organize plus-strand RNAs for packaging and replication by removing interfering secondary structures. The RTPase activity plays a role in the removal of the gamma-phosphate from the rotavirus RNA minus strands of dsRNA genome segments. Participates in the selective exclusion of host proteins from stress granules (SG) and P bodies (PB). Also participates in the sequestration of these remodeled organelles in viral factories.</text>
</comment>
<comment type="cofactor">
    <cofactor evidence="1">
        <name>Mg(2+)</name>
        <dbReference type="ChEBI" id="CHEBI:18420"/>
    </cofactor>
</comment>
<comment type="subunit">
    <text evidence="1">Homooctamer. Interacts with VP1; this interaction is weak. Interacts with NSP5; this interaction leads to up-regulation of NSP5 phosphorylation and formation of viral factories. Interacts with host DCP1A, DCP1B, DDX6, EDC4 and EIF2S1/eIF2-alpha; these interactions are probably part of the sequestration of some host SGs and PBs proteins in viral factories.</text>
</comment>
<comment type="subcellular location">
    <subcellularLocation>
        <location evidence="1">Host cytoplasm</location>
    </subcellularLocation>
    <text evidence="1">Found in spherical cytoplasmic structures, called viral factories, that appear early after infection and are the site of viral replication and packaging.</text>
</comment>
<comment type="similarity">
    <text evidence="1">Belongs to the rotavirus NSP2 family.</text>
</comment>
<feature type="chain" id="PRO_0000149552" description="Non-structural protein 2">
    <location>
        <begin position="1"/>
        <end position="317"/>
    </location>
</feature>
<feature type="region of interest" description="RNA-binding" evidence="1 2">
    <location>
        <begin position="205"/>
        <end position="241"/>
    </location>
</feature>
<feature type="active site" description="For NTPase and RTPase activities" evidence="1 3">
    <location>
        <position position="225"/>
    </location>
</feature>
<feature type="binding site" evidence="1 4">
    <location>
        <begin position="107"/>
        <end position="109"/>
    </location>
    <ligand>
        <name>ATP</name>
        <dbReference type="ChEBI" id="CHEBI:30616"/>
    </ligand>
</feature>
<feature type="binding site" evidence="1 4">
    <location>
        <position position="188"/>
    </location>
    <ligand>
        <name>ATP</name>
        <dbReference type="ChEBI" id="CHEBI:30616"/>
    </ligand>
</feature>
<feature type="binding site" evidence="1 4">
    <location>
        <begin position="221"/>
        <end position="223"/>
    </location>
    <ligand>
        <name>ATP</name>
        <dbReference type="ChEBI" id="CHEBI:30616"/>
    </ligand>
</feature>
<feature type="binding site" evidence="1 4">
    <location>
        <position position="227"/>
    </location>
    <ligand>
        <name>ATP</name>
        <dbReference type="ChEBI" id="CHEBI:30616"/>
    </ligand>
</feature>
<feature type="helix" evidence="7">
    <location>
        <begin position="4"/>
        <end position="6"/>
    </location>
</feature>
<feature type="strand" evidence="7">
    <location>
        <begin position="8"/>
        <end position="13"/>
    </location>
</feature>
<feature type="strand" evidence="7">
    <location>
        <begin position="16"/>
        <end position="21"/>
    </location>
</feature>
<feature type="helix" evidence="7">
    <location>
        <begin position="24"/>
        <end position="31"/>
    </location>
</feature>
<feature type="helix" evidence="7">
    <location>
        <begin position="37"/>
        <end position="39"/>
    </location>
</feature>
<feature type="strand" evidence="7">
    <location>
        <begin position="47"/>
        <end position="49"/>
    </location>
</feature>
<feature type="helix" evidence="7">
    <location>
        <begin position="55"/>
        <end position="60"/>
    </location>
</feature>
<feature type="strand" evidence="7">
    <location>
        <begin position="68"/>
        <end position="70"/>
    </location>
</feature>
<feature type="helix" evidence="7">
    <location>
        <begin position="75"/>
        <end position="89"/>
    </location>
</feature>
<feature type="turn" evidence="7">
    <location>
        <begin position="90"/>
        <end position="92"/>
    </location>
</feature>
<feature type="turn" evidence="7">
    <location>
        <begin position="95"/>
        <end position="97"/>
    </location>
</feature>
<feature type="helix" evidence="7">
    <location>
        <begin position="98"/>
        <end position="103"/>
    </location>
</feature>
<feature type="helix" evidence="7">
    <location>
        <begin position="108"/>
        <end position="118"/>
    </location>
</feature>
<feature type="helix" evidence="7">
    <location>
        <begin position="124"/>
        <end position="127"/>
    </location>
</feature>
<feature type="helix" evidence="7">
    <location>
        <begin position="129"/>
        <end position="139"/>
    </location>
</feature>
<feature type="helix" evidence="6">
    <location>
        <begin position="149"/>
        <end position="151"/>
    </location>
</feature>
<feature type="strand" evidence="7">
    <location>
        <begin position="156"/>
        <end position="160"/>
    </location>
</feature>
<feature type="strand" evidence="7">
    <location>
        <begin position="162"/>
        <end position="168"/>
    </location>
</feature>
<feature type="helix" evidence="7">
    <location>
        <begin position="171"/>
        <end position="173"/>
    </location>
</feature>
<feature type="strand" evidence="7">
    <location>
        <begin position="175"/>
        <end position="177"/>
    </location>
</feature>
<feature type="strand" evidence="7">
    <location>
        <begin position="186"/>
        <end position="191"/>
    </location>
</feature>
<feature type="helix" evidence="7">
    <location>
        <begin position="199"/>
        <end position="212"/>
    </location>
</feature>
<feature type="turn" evidence="6">
    <location>
        <begin position="213"/>
        <end position="215"/>
    </location>
</feature>
<feature type="strand" evidence="7">
    <location>
        <begin position="216"/>
        <end position="219"/>
    </location>
</feature>
<feature type="strand" evidence="7">
    <location>
        <begin position="222"/>
        <end position="230"/>
    </location>
</feature>
<feature type="helix" evidence="7">
    <location>
        <begin position="231"/>
        <end position="233"/>
    </location>
</feature>
<feature type="helix" evidence="7">
    <location>
        <begin position="234"/>
        <end position="251"/>
    </location>
</feature>
<feature type="turn" evidence="7">
    <location>
        <begin position="262"/>
        <end position="264"/>
    </location>
</feature>
<feature type="helix" evidence="7">
    <location>
        <begin position="267"/>
        <end position="277"/>
    </location>
</feature>
<feature type="helix" evidence="7">
    <location>
        <begin position="282"/>
        <end position="289"/>
    </location>
</feature>
<feature type="strand" evidence="5">
    <location>
        <begin position="295"/>
        <end position="297"/>
    </location>
</feature>
<feature type="turn" evidence="7">
    <location>
        <begin position="299"/>
        <end position="302"/>
    </location>
</feature>
<feature type="helix" evidence="7">
    <location>
        <begin position="303"/>
        <end position="312"/>
    </location>
</feature>
<proteinExistence type="evidence at protein level"/>
<organism>
    <name type="scientific">Rotavirus A (strain RVA/SA11-Ramig/G3P[X])</name>
    <name type="common">RV-A</name>
    <name type="synonym">Simian Agent 11 (strain Ramig)</name>
    <dbReference type="NCBI Taxonomy" id="36435"/>
    <lineage>
        <taxon>Viruses</taxon>
        <taxon>Riboviria</taxon>
        <taxon>Orthornavirae</taxon>
        <taxon>Duplornaviricota</taxon>
        <taxon>Resentoviricetes</taxon>
        <taxon>Reovirales</taxon>
        <taxon>Sedoreoviridae</taxon>
        <taxon>Rotavirus</taxon>
        <taxon>Rotavirus A</taxon>
    </lineage>
</organism>
<organismHost>
    <name type="scientific">Macaca mulatta</name>
    <name type="common">Rhesus macaque</name>
    <dbReference type="NCBI Taxonomy" id="9544"/>
</organismHost>
<keyword id="KW-0002">3D-structure</keyword>
<keyword id="KW-0067">ATP-binding</keyword>
<keyword id="KW-1035">Host cytoplasm</keyword>
<keyword id="KW-0378">Hydrolase</keyword>
<keyword id="KW-0460">Magnesium</keyword>
<keyword id="KW-0479">Metal-binding</keyword>
<keyword id="KW-0547">Nucleotide-binding</keyword>
<keyword id="KW-0694">RNA-binding</keyword>
<reference key="1">
    <citation type="journal article" date="1993" name="Virology">
        <title>Nucleotide and amino acid sequence analysis of the rotavirus nonstructural RNA-binding protein NS35.</title>
        <authorList>
            <person name="Patton J.T."/>
            <person name="Salter-Cid L."/>
            <person name="Kalbach A.N."/>
            <person name="Mansell E.A."/>
            <person name="Kattoura M.D."/>
        </authorList>
    </citation>
    <scope>NUCLEOTIDE SEQUENCE [GENOMIC RNA]</scope>
</reference>
<reference key="2">
    <citation type="journal article" date="2002" name="Nature">
        <title>Rotavirus protein involved in genome replication and packaging exhibits a HIT-like fold.</title>
        <authorList>
            <person name="Jayaram H."/>
            <person name="Taraporewala Z.F."/>
            <person name="Patton J.T."/>
            <person name="Prasad B.V.V."/>
        </authorList>
    </citation>
    <scope>X-RAY CRYSTALLOGRAPHY (2.6 ANGSTROMS)</scope>
</reference>
<reference key="3">
    <citation type="journal article" date="2007" name="J. Virol.">
        <title>Crystallographic and biochemical analysis of rotavirus NSP2 with nucleotides reveals a nucleoside diphosphate kinase-like activity.</title>
        <authorList>
            <person name="Kumar M."/>
            <person name="Jayaram H."/>
            <person name="Vasquez-Del Carpio R."/>
            <person name="Jiang X."/>
            <person name="Taraporewala Z.F."/>
            <person name="Jacobson R.H."/>
            <person name="Patton J.T."/>
            <person name="Prasad B.V.V."/>
        </authorList>
    </citation>
    <scope>X-RAY CRYSTALLOGRAPHY (2.6 ANGSTROMS) IN COMPLEX WITH ATP ANALOG</scope>
    <scope>ACTIVE SITE</scope>
</reference>
<reference key="4">
    <citation type="journal article" date="2012" name="J. Virol.">
        <title>Crystallographic Analysis of Rotavirus NSP2-RNA Complex Reveals Specific Recognition of 5' GG Sequence for RTPase Activity.</title>
        <authorList>
            <person name="Hu L."/>
            <person name="Chow D.C."/>
            <person name="Patton J.T."/>
            <person name="Palzkill T."/>
            <person name="Estes M.K."/>
            <person name="Prasad B.V."/>
        </authorList>
    </citation>
    <scope>X-RAY CRYSTALLOGRAPHY (2.10 ANGSTROMS)</scope>
    <scope>RNA-BINDING</scope>
</reference>
<name>NSP2_ROTSR</name>
<protein>
    <recommendedName>
        <fullName evidence="1">Non-structural protein 2</fullName>
        <shortName evidence="1">NSP2</shortName>
        <ecNumber evidence="1">3.6.4.-</ecNumber>
    </recommendedName>
    <alternativeName>
        <fullName evidence="1">NCVP3</fullName>
    </alternativeName>
    <alternativeName>
        <fullName evidence="1">Non-structural RNA-binding protein 35</fullName>
        <shortName evidence="1">NS35</shortName>
    </alternativeName>
</protein>
<sequence>MAELACFCYPHLENDSYKFIPFNNLAIKAMLTAKVDKKDMDKFYDSIIYGIAPPPQFKKRYNTNDNSRGMNFETIMFTKVAMLICEALNSLKVTQANVSNVLSRVVSIRHLENLVIRKENPQDILFHSKDLLLKSTLIAIGQSKEIETTITAEGGEIVFQNAAFTMWKLTYLEHQLMPILDQNFIEYKVTLNEDKPISDVHVKELVAELRWQYNKFAVITHGKGHYRIVKYSSVANHADRVYATFKSNVKTGVNNDFNLLDQRIIWQNWYAFTSSMKQGNTLDVCKRLLFQKMKPEKNPFKGLSTDRKMDEVSQVGV</sequence>
<accession>Q03243</accession>
<evidence type="ECO:0000255" key="1">
    <source>
        <dbReference type="HAMAP-Rule" id="MF_04089"/>
    </source>
</evidence>
<evidence type="ECO:0000269" key="2">
    <source>
    </source>
</evidence>
<evidence type="ECO:0000305" key="3">
    <source>
    </source>
</evidence>
<evidence type="ECO:0007744" key="4">
    <source>
        <dbReference type="PDB" id="2R7P"/>
    </source>
</evidence>
<evidence type="ECO:0007829" key="5">
    <source>
        <dbReference type="PDB" id="1L9V"/>
    </source>
</evidence>
<evidence type="ECO:0007829" key="6">
    <source>
        <dbReference type="PDB" id="2R7J"/>
    </source>
</evidence>
<evidence type="ECO:0007829" key="7">
    <source>
        <dbReference type="PDB" id="4G0A"/>
    </source>
</evidence>